<dbReference type="EMBL" id="CP000926">
    <property type="protein sequence ID" value="ABY96890.1"/>
    <property type="molecule type" value="Genomic_DNA"/>
</dbReference>
<dbReference type="SMR" id="B0KQK2"/>
<dbReference type="KEGG" id="ppg:PputGB1_0980"/>
<dbReference type="eggNOG" id="COG3081">
    <property type="taxonomic scope" value="Bacteria"/>
</dbReference>
<dbReference type="HOGENOM" id="CLU_063050_0_1_6"/>
<dbReference type="Proteomes" id="UP000002157">
    <property type="component" value="Chromosome"/>
</dbReference>
<dbReference type="GO" id="GO:0043590">
    <property type="term" value="C:bacterial nucleoid"/>
    <property type="evidence" value="ECO:0007669"/>
    <property type="project" value="TreeGrafter"/>
</dbReference>
<dbReference type="GO" id="GO:0005737">
    <property type="term" value="C:cytoplasm"/>
    <property type="evidence" value="ECO:0007669"/>
    <property type="project" value="UniProtKB-UniRule"/>
</dbReference>
<dbReference type="GO" id="GO:0003690">
    <property type="term" value="F:double-stranded DNA binding"/>
    <property type="evidence" value="ECO:0007669"/>
    <property type="project" value="TreeGrafter"/>
</dbReference>
<dbReference type="GO" id="GO:0003727">
    <property type="term" value="F:single-stranded RNA binding"/>
    <property type="evidence" value="ECO:0007669"/>
    <property type="project" value="TreeGrafter"/>
</dbReference>
<dbReference type="HAMAP" id="MF_00730">
    <property type="entry name" value="NdpA"/>
    <property type="match status" value="1"/>
</dbReference>
<dbReference type="InterPro" id="IPR007358">
    <property type="entry name" value="Nucleoid_associated_NdpA"/>
</dbReference>
<dbReference type="NCBIfam" id="NF001557">
    <property type="entry name" value="PRK00378.1"/>
    <property type="match status" value="1"/>
</dbReference>
<dbReference type="PANTHER" id="PTHR38772">
    <property type="match status" value="1"/>
</dbReference>
<dbReference type="PANTHER" id="PTHR38772:SF1">
    <property type="entry name" value="NUCLEOID-ASSOCIATED PROTEIN YEJK"/>
    <property type="match status" value="1"/>
</dbReference>
<dbReference type="Pfam" id="PF04245">
    <property type="entry name" value="NA37"/>
    <property type="match status" value="1"/>
</dbReference>
<protein>
    <recommendedName>
        <fullName evidence="1">Nucleoid-associated protein PputGB1_0980</fullName>
    </recommendedName>
</protein>
<evidence type="ECO:0000255" key="1">
    <source>
        <dbReference type="HAMAP-Rule" id="MF_00730"/>
    </source>
</evidence>
<reference key="1">
    <citation type="submission" date="2008-01" db="EMBL/GenBank/DDBJ databases">
        <title>Complete sequence of Pseudomonas putida GB-1.</title>
        <authorList>
            <consortium name="US DOE Joint Genome Institute"/>
            <person name="Copeland A."/>
            <person name="Lucas S."/>
            <person name="Lapidus A."/>
            <person name="Barry K."/>
            <person name="Glavina del Rio T."/>
            <person name="Dalin E."/>
            <person name="Tice H."/>
            <person name="Pitluck S."/>
            <person name="Bruce D."/>
            <person name="Goodwin L."/>
            <person name="Chertkov O."/>
            <person name="Brettin T."/>
            <person name="Detter J.C."/>
            <person name="Han C."/>
            <person name="Kuske C.R."/>
            <person name="Schmutz J."/>
            <person name="Larimer F."/>
            <person name="Land M."/>
            <person name="Hauser L."/>
            <person name="Kyrpides N."/>
            <person name="Kim E."/>
            <person name="McCarthy J.K."/>
            <person name="Richardson P."/>
        </authorList>
    </citation>
    <scope>NUCLEOTIDE SEQUENCE [LARGE SCALE GENOMIC DNA]</scope>
    <source>
        <strain>GB-1</strain>
    </source>
</reference>
<name>NDPA_PSEPG</name>
<organism>
    <name type="scientific">Pseudomonas putida (strain GB-1)</name>
    <dbReference type="NCBI Taxonomy" id="76869"/>
    <lineage>
        <taxon>Bacteria</taxon>
        <taxon>Pseudomonadati</taxon>
        <taxon>Pseudomonadota</taxon>
        <taxon>Gammaproteobacteria</taxon>
        <taxon>Pseudomonadales</taxon>
        <taxon>Pseudomonadaceae</taxon>
        <taxon>Pseudomonas</taxon>
    </lineage>
</organism>
<comment type="subcellular location">
    <subcellularLocation>
        <location evidence="1">Cytoplasm</location>
        <location evidence="1">Nucleoid</location>
    </subcellularLocation>
</comment>
<comment type="similarity">
    <text evidence="1">Belongs to the YejK family.</text>
</comment>
<sequence>MPIRHCIVHLIDKKPDGSPAVLHARDSELAASDAIENLLADLNDSYNAKQGKAWGFFHGESGAYPLSGWLKQYLDEEKDFTAFSRVAVEHLQKLMEESNLSTGGHILFAHYQQGMTEYLAIALLHHSEGVAVNAELDVTPSRHLDLGQLHLAARINLSEWKNNQNSKQYISFIKGKNGKKVSDYFRDFIGCQEGVDGPGETRTLLKAFSDFVESEDLPEESAREKTQTLVEYATTQTKLGEPVTLEELSSLIDEDRPKAFYDHIRNKDYGLSPEIPADKRTLNQFRRFTGRAEGLSISFEAHLLGDKVEYDEAAGTLIIKGLPTTLVDQLKRRKD</sequence>
<keyword id="KW-0963">Cytoplasm</keyword>
<feature type="chain" id="PRO_1000083329" description="Nucleoid-associated protein PputGB1_0980">
    <location>
        <begin position="1"/>
        <end position="335"/>
    </location>
</feature>
<gene>
    <name type="ordered locus">PputGB1_0980</name>
</gene>
<proteinExistence type="inferred from homology"/>
<accession>B0KQK2</accession>